<sequence length="1198" mass="133515">MTPEGTGLQFVSPFAFEAMQKVDVVRLASLSDPELRLLLPCLVRMALCAPADQSQSWAQDKKLILRLLSGVEAVNSIVALLSVDFHALEQDASKEQQLRHKLGGGSGESILVSQLQHGLTLEFEHSDSPRRLRLVLSELLAIMNKVSECNGEFFFKSSELFESAVYLEEAADVLCILQAELPSLLPIVDVAEALLRVRNGAWFLCLLVANVPDSFNEVCRGLIKNGERQDEESLGGRRRTDALRFLCRMNPSQALKVRGMVVEECHLPGLGVALTLDHTKTEACEDGVSDLVCFVSGLLLGTNAKVRTWFGTFIRNGQQRKRETSGSVLWQMRRQLLLELMGILPTVRSTRIVEEADVEMEPTVSVYSGLKEEHVVKASALLRLYCALMGIAGLKPTEEEAEQLLQLMTSRPPATPAGVRFVSLSFCMLLAFSTLVSTPEQEQLMVLWLSWMIKEEAYFESTSGVSASFGEMLLLVAMYFHSNQLSAIIDLVCSTLGMKIVIKPSSLSRMKTIFTQEIFTEQVVTAHAVRVPVTSNLSANITGFLPIHCIYQLLRSRSFTKHKVSIKDWIYRQLCETSTPLHPQLLPLIDVYINSILTPASKSNPEATNQPVTEQEILNLFQEVIGGDSVRLTQRFSITAQLLVLYYILSYEEALLANTKTLASMQRKPKSYSSSLMDQIPIKFLIRQAQGLQQELGGLHSALLRLLATNYPHLCIVDDWICEEEITGTDALLRRMLLTSNAKTHSPKQLQEAFSAVPVSHTQVMQIMEHLTLLSASELIPYAEVLTSNMNQLLNSGVPRRILQTVNKLWMVLNTVMPRRLWVMTVNALQPSIKFIRQQKYTQNDLMIDPLIVLRCDRRVHRCPPLMDVTLHMLNGYLLASKAYLSAHLKETAEQDRPSPNNTVGLVGQTDAPEVTREELKNALLAAQDSAAVQILLEICLPTEEEKAKGANSDISLRNTQGVTTISTPSKETEEGEDNLLCNLREVQCLICCLLHQMYIADPNIAKLVHFQGYPCELLPLTVAGIPSMHICLDFIPELIAQPELEKQIFAIQLLSHLCIQYALPKSLSVARLAVNVMGTLLTVLTQAKRYSFFMPTLPSLVSFCRAFPPLYEDIMSLLIQIGQVCASDVATQTRDIDPIITRLQQIKEKPSGWSQICKDPSYKNGSRDTGSMDPDVQLCHCIESTIIEIINMSVSGI</sequence>
<proteinExistence type="evidence at protein level"/>
<comment type="function">
    <text evidence="1">Component of the integrator complex, a multiprotein complex that terminates RNA polymerase II (Pol II) transcription in the promoter-proximal region of genes. The integrator complex provides a quality checkpoint during transcription elongation by driving premature transcription termination of transcripts that are unfavorably configured for transcriptional elongation: the complex terminates transcription by (1) catalyzing dephosphorylation of the C-terminal domain (CTD) of Pol II subunit POLR2A/RPB1 and SUPT5H/SPT5, (2) degrading the exiting nascent RNA transcript via endonuclease activity and (3) promoting the release of Pol II from bound DNA. The integrator complex is also involved in terminating the synthesis of non-coding Pol II transcripts, such as enhancer RNAs (eRNAs), small nuclear RNAs (snRNAs), telomerase RNAs and long non-coding RNAs (lncRNAs). Mediates recruitment of cytoplasmic dynein to the nuclear envelope, probably as component of the integrator complex.</text>
</comment>
<comment type="subunit">
    <text evidence="1">Component of the Integrator complex, composed of core subunits INTS1, INTS2, INTS3, INTS4, INTS5, INTS6, INTS7, INTS8, INTS9/RC74, INTS10, INTS11/CPSF3L, INTS12, INTS13, INTS14 and INTS15. The core complex associates with protein phosphatase 2A subunits PPP2CA and PPP2R1A, to form the Integrator-PP2A (INTAC) complex.</text>
</comment>
<comment type="subcellular location">
    <subcellularLocation>
        <location evidence="1">Nucleus</location>
    </subcellularLocation>
    <subcellularLocation>
        <location evidence="1">Nucleus membrane</location>
        <topology evidence="2">Single-pass membrane protein</topology>
    </subcellularLocation>
    <subcellularLocation>
        <location evidence="1">Cytoplasm</location>
    </subcellularLocation>
</comment>
<comment type="alternative products">
    <event type="alternative splicing"/>
    <isoform>
        <id>Q80UK8-1</id>
        <name>1</name>
        <sequence type="displayed"/>
    </isoform>
    <isoform>
        <id>Q80UK8-2</id>
        <name>2</name>
        <sequence type="described" ref="VSP_018574 VSP_018575"/>
    </isoform>
</comment>
<comment type="similarity">
    <text evidence="4">Belongs to the Integrator subunit 2 family.</text>
</comment>
<comment type="sequence caution" evidence="4">
    <conflict type="erroneous initiation">
        <sequence resource="EMBL-CDS" id="BAC98133"/>
    </conflict>
    <text>Extended N-terminus.</text>
</comment>
<reference key="1">
    <citation type="journal article" date="2004" name="DNA Res.">
        <title>Prediction of the coding sequences of mouse homologues of FLJ genes: the complete nucleotide sequences of 110 mouse FLJ-homologous cDNAs identified by screening of terminal sequences of cDNA clones randomly sampled from size-fractionated libraries.</title>
        <authorList>
            <person name="Okazaki N."/>
            <person name="Kikuno R."/>
            <person name="Ohara R."/>
            <person name="Inamoto S."/>
            <person name="Koseki H."/>
            <person name="Hiraoka S."/>
            <person name="Saga Y."/>
            <person name="Kitamura H."/>
            <person name="Nakagawa T."/>
            <person name="Nagase T."/>
            <person name="Ohara O."/>
            <person name="Koga H."/>
        </authorList>
    </citation>
    <scope>NUCLEOTIDE SEQUENCE [LARGE SCALE MRNA] (ISOFORM 1)</scope>
    <source>
        <tissue>Embryonic tail</tissue>
    </source>
</reference>
<reference key="2">
    <citation type="journal article" date="2005" name="Science">
        <title>The transcriptional landscape of the mammalian genome.</title>
        <authorList>
            <person name="Carninci P."/>
            <person name="Kasukawa T."/>
            <person name="Katayama S."/>
            <person name="Gough J."/>
            <person name="Frith M.C."/>
            <person name="Maeda N."/>
            <person name="Oyama R."/>
            <person name="Ravasi T."/>
            <person name="Lenhard B."/>
            <person name="Wells C."/>
            <person name="Kodzius R."/>
            <person name="Shimokawa K."/>
            <person name="Bajic V.B."/>
            <person name="Brenner S.E."/>
            <person name="Batalov S."/>
            <person name="Forrest A.R."/>
            <person name="Zavolan M."/>
            <person name="Davis M.J."/>
            <person name="Wilming L.G."/>
            <person name="Aidinis V."/>
            <person name="Allen J.E."/>
            <person name="Ambesi-Impiombato A."/>
            <person name="Apweiler R."/>
            <person name="Aturaliya R.N."/>
            <person name="Bailey T.L."/>
            <person name="Bansal M."/>
            <person name="Baxter L."/>
            <person name="Beisel K.W."/>
            <person name="Bersano T."/>
            <person name="Bono H."/>
            <person name="Chalk A.M."/>
            <person name="Chiu K.P."/>
            <person name="Choudhary V."/>
            <person name="Christoffels A."/>
            <person name="Clutterbuck D.R."/>
            <person name="Crowe M.L."/>
            <person name="Dalla E."/>
            <person name="Dalrymple B.P."/>
            <person name="de Bono B."/>
            <person name="Della Gatta G."/>
            <person name="di Bernardo D."/>
            <person name="Down T."/>
            <person name="Engstrom P."/>
            <person name="Fagiolini M."/>
            <person name="Faulkner G."/>
            <person name="Fletcher C.F."/>
            <person name="Fukushima T."/>
            <person name="Furuno M."/>
            <person name="Futaki S."/>
            <person name="Gariboldi M."/>
            <person name="Georgii-Hemming P."/>
            <person name="Gingeras T.R."/>
            <person name="Gojobori T."/>
            <person name="Green R.E."/>
            <person name="Gustincich S."/>
            <person name="Harbers M."/>
            <person name="Hayashi Y."/>
            <person name="Hensch T.K."/>
            <person name="Hirokawa N."/>
            <person name="Hill D."/>
            <person name="Huminiecki L."/>
            <person name="Iacono M."/>
            <person name="Ikeo K."/>
            <person name="Iwama A."/>
            <person name="Ishikawa T."/>
            <person name="Jakt M."/>
            <person name="Kanapin A."/>
            <person name="Katoh M."/>
            <person name="Kawasawa Y."/>
            <person name="Kelso J."/>
            <person name="Kitamura H."/>
            <person name="Kitano H."/>
            <person name="Kollias G."/>
            <person name="Krishnan S.P."/>
            <person name="Kruger A."/>
            <person name="Kummerfeld S.K."/>
            <person name="Kurochkin I.V."/>
            <person name="Lareau L.F."/>
            <person name="Lazarevic D."/>
            <person name="Lipovich L."/>
            <person name="Liu J."/>
            <person name="Liuni S."/>
            <person name="McWilliam S."/>
            <person name="Madan Babu M."/>
            <person name="Madera M."/>
            <person name="Marchionni L."/>
            <person name="Matsuda H."/>
            <person name="Matsuzawa S."/>
            <person name="Miki H."/>
            <person name="Mignone F."/>
            <person name="Miyake S."/>
            <person name="Morris K."/>
            <person name="Mottagui-Tabar S."/>
            <person name="Mulder N."/>
            <person name="Nakano N."/>
            <person name="Nakauchi H."/>
            <person name="Ng P."/>
            <person name="Nilsson R."/>
            <person name="Nishiguchi S."/>
            <person name="Nishikawa S."/>
            <person name="Nori F."/>
            <person name="Ohara O."/>
            <person name="Okazaki Y."/>
            <person name="Orlando V."/>
            <person name="Pang K.C."/>
            <person name="Pavan W.J."/>
            <person name="Pavesi G."/>
            <person name="Pesole G."/>
            <person name="Petrovsky N."/>
            <person name="Piazza S."/>
            <person name="Reed J."/>
            <person name="Reid J.F."/>
            <person name="Ring B.Z."/>
            <person name="Ringwald M."/>
            <person name="Rost B."/>
            <person name="Ruan Y."/>
            <person name="Salzberg S.L."/>
            <person name="Sandelin A."/>
            <person name="Schneider C."/>
            <person name="Schoenbach C."/>
            <person name="Sekiguchi K."/>
            <person name="Semple C.A."/>
            <person name="Seno S."/>
            <person name="Sessa L."/>
            <person name="Sheng Y."/>
            <person name="Shibata Y."/>
            <person name="Shimada H."/>
            <person name="Shimada K."/>
            <person name="Silva D."/>
            <person name="Sinclair B."/>
            <person name="Sperling S."/>
            <person name="Stupka E."/>
            <person name="Sugiura K."/>
            <person name="Sultana R."/>
            <person name="Takenaka Y."/>
            <person name="Taki K."/>
            <person name="Tammoja K."/>
            <person name="Tan S.L."/>
            <person name="Tang S."/>
            <person name="Taylor M.S."/>
            <person name="Tegner J."/>
            <person name="Teichmann S.A."/>
            <person name="Ueda H.R."/>
            <person name="van Nimwegen E."/>
            <person name="Verardo R."/>
            <person name="Wei C.L."/>
            <person name="Yagi K."/>
            <person name="Yamanishi H."/>
            <person name="Zabarovsky E."/>
            <person name="Zhu S."/>
            <person name="Zimmer A."/>
            <person name="Hide W."/>
            <person name="Bult C."/>
            <person name="Grimmond S.M."/>
            <person name="Teasdale R.D."/>
            <person name="Liu E.T."/>
            <person name="Brusic V."/>
            <person name="Quackenbush J."/>
            <person name="Wahlestedt C."/>
            <person name="Mattick J.S."/>
            <person name="Hume D.A."/>
            <person name="Kai C."/>
            <person name="Sasaki D."/>
            <person name="Tomaru Y."/>
            <person name="Fukuda S."/>
            <person name="Kanamori-Katayama M."/>
            <person name="Suzuki M."/>
            <person name="Aoki J."/>
            <person name="Arakawa T."/>
            <person name="Iida J."/>
            <person name="Imamura K."/>
            <person name="Itoh M."/>
            <person name="Kato T."/>
            <person name="Kawaji H."/>
            <person name="Kawagashira N."/>
            <person name="Kawashima T."/>
            <person name="Kojima M."/>
            <person name="Kondo S."/>
            <person name="Konno H."/>
            <person name="Nakano K."/>
            <person name="Ninomiya N."/>
            <person name="Nishio T."/>
            <person name="Okada M."/>
            <person name="Plessy C."/>
            <person name="Shibata K."/>
            <person name="Shiraki T."/>
            <person name="Suzuki S."/>
            <person name="Tagami M."/>
            <person name="Waki K."/>
            <person name="Watahiki A."/>
            <person name="Okamura-Oho Y."/>
            <person name="Suzuki H."/>
            <person name="Kawai J."/>
            <person name="Hayashizaki Y."/>
        </authorList>
    </citation>
    <scope>NUCLEOTIDE SEQUENCE [LARGE SCALE MRNA] (ISOFORM 2)</scope>
    <source>
        <strain>C57BL/6J</strain>
        <tissue>Vagina</tissue>
    </source>
</reference>
<reference key="3">
    <citation type="journal article" date="2009" name="PLoS Biol.">
        <title>Lineage-specific biology revealed by a finished genome assembly of the mouse.</title>
        <authorList>
            <person name="Church D.M."/>
            <person name="Goodstadt L."/>
            <person name="Hillier L.W."/>
            <person name="Zody M.C."/>
            <person name="Goldstein S."/>
            <person name="She X."/>
            <person name="Bult C.J."/>
            <person name="Agarwala R."/>
            <person name="Cherry J.L."/>
            <person name="DiCuccio M."/>
            <person name="Hlavina W."/>
            <person name="Kapustin Y."/>
            <person name="Meric P."/>
            <person name="Maglott D."/>
            <person name="Birtle Z."/>
            <person name="Marques A.C."/>
            <person name="Graves T."/>
            <person name="Zhou S."/>
            <person name="Teague B."/>
            <person name="Potamousis K."/>
            <person name="Churas C."/>
            <person name="Place M."/>
            <person name="Herschleb J."/>
            <person name="Runnheim R."/>
            <person name="Forrest D."/>
            <person name="Amos-Landgraf J."/>
            <person name="Schwartz D.C."/>
            <person name="Cheng Z."/>
            <person name="Lindblad-Toh K."/>
            <person name="Eichler E.E."/>
            <person name="Ponting C.P."/>
        </authorList>
    </citation>
    <scope>NUCLEOTIDE SEQUENCE [LARGE SCALE GENOMIC DNA]</scope>
    <source>
        <strain>C57BL/6J</strain>
    </source>
</reference>
<reference key="4">
    <citation type="journal article" date="2004" name="Genome Res.">
        <title>The status, quality, and expansion of the NIH full-length cDNA project: the Mammalian Gene Collection (MGC).</title>
        <authorList>
            <consortium name="The MGC Project Team"/>
        </authorList>
    </citation>
    <scope>NUCLEOTIDE SEQUENCE [LARGE SCALE MRNA] (ISOFORM 1)</scope>
    <source>
        <strain>B5/EGFP</strain>
        <tissue>Brain</tissue>
        <tissue>Trophoblast stem cell</tissue>
    </source>
</reference>
<reference key="5">
    <citation type="journal article" date="2010" name="Cell">
        <title>A tissue-specific atlas of mouse protein phosphorylation and expression.</title>
        <authorList>
            <person name="Huttlin E.L."/>
            <person name="Jedrychowski M.P."/>
            <person name="Elias J.E."/>
            <person name="Goswami T."/>
            <person name="Rad R."/>
            <person name="Beausoleil S.A."/>
            <person name="Villen J."/>
            <person name="Haas W."/>
            <person name="Sowa M.E."/>
            <person name="Gygi S.P."/>
        </authorList>
    </citation>
    <scope>IDENTIFICATION BY MASS SPECTROMETRY [LARGE SCALE ANALYSIS]</scope>
    <source>
        <tissue>Kidney</tissue>
        <tissue>Liver</tissue>
        <tissue>Lung</tissue>
        <tissue>Spleen</tissue>
        <tissue>Testis</tissue>
    </source>
</reference>
<gene>
    <name type="primary">Ints2</name>
    <name type="synonym">Kiaa1287</name>
</gene>
<accession>Q80UK8</accession>
<accession>Q5SXZ5</accession>
<accession>Q5SXZ6</accession>
<accession>Q6PCY7</accession>
<accession>Q6ZPU6</accession>
<accession>Q8CB15</accession>
<accession>Q9CSE0</accession>
<organism>
    <name type="scientific">Mus musculus</name>
    <name type="common">Mouse</name>
    <dbReference type="NCBI Taxonomy" id="10090"/>
    <lineage>
        <taxon>Eukaryota</taxon>
        <taxon>Metazoa</taxon>
        <taxon>Chordata</taxon>
        <taxon>Craniata</taxon>
        <taxon>Vertebrata</taxon>
        <taxon>Euteleostomi</taxon>
        <taxon>Mammalia</taxon>
        <taxon>Eutheria</taxon>
        <taxon>Euarchontoglires</taxon>
        <taxon>Glires</taxon>
        <taxon>Rodentia</taxon>
        <taxon>Myomorpha</taxon>
        <taxon>Muroidea</taxon>
        <taxon>Muridae</taxon>
        <taxon>Murinae</taxon>
        <taxon>Mus</taxon>
        <taxon>Mus</taxon>
    </lineage>
</organism>
<feature type="chain" id="PRO_0000236100" description="Integrator complex subunit 2">
    <location>
        <begin position="1"/>
        <end position="1198"/>
    </location>
</feature>
<feature type="transmembrane region" description="Helical" evidence="2">
    <location>
        <begin position="421"/>
        <end position="437"/>
    </location>
</feature>
<feature type="splice variant" id="VSP_018574" description="In isoform 2." evidence="3">
    <original>PTE</original>
    <variation>YSI</variation>
    <location>
        <begin position="396"/>
        <end position="398"/>
    </location>
</feature>
<feature type="splice variant" id="VSP_018575" description="In isoform 2." evidence="3">
    <location>
        <begin position="399"/>
        <end position="1198"/>
    </location>
</feature>
<feature type="sequence conflict" description="In Ref. 4; AAH50081." evidence="4" ref="4">
    <original>V</original>
    <variation>A</variation>
    <location>
        <position position="11"/>
    </location>
</feature>
<feature type="sequence conflict" description="In Ref. 1; BAC98133 and 4; AAH50081." evidence="4" ref="1 4">
    <original>R</original>
    <variation>H</variation>
    <location>
        <position position="196"/>
    </location>
</feature>
<feature type="sequence conflict" description="In Ref. 2; BAB28647." evidence="4" ref="2">
    <original>A</original>
    <variation>G</variation>
    <location>
        <position position="883"/>
    </location>
</feature>
<feature type="sequence conflict" description="In Ref. 2; BAB28647." evidence="4" ref="2">
    <original>A</original>
    <variation>G</variation>
    <location>
        <position position="887"/>
    </location>
</feature>
<feature type="sequence conflict" description="In Ref. 4; AAH50081." evidence="4" ref="4">
    <original>C</original>
    <variation>R</variation>
    <location>
        <position position="992"/>
    </location>
</feature>
<feature type="sequence conflict" description="In Ref. 4; AAH50081." evidence="4" ref="4">
    <original>S</original>
    <variation>G</variation>
    <location>
        <position position="1100"/>
    </location>
</feature>
<feature type="sequence conflict" description="In Ref. 4; AAH50081." evidence="4" ref="4">
    <original>R</original>
    <variation>C</variation>
    <location>
        <position position="1143"/>
    </location>
</feature>
<evidence type="ECO:0000250" key="1">
    <source>
        <dbReference type="UniProtKB" id="Q9H0H0"/>
    </source>
</evidence>
<evidence type="ECO:0000255" key="2"/>
<evidence type="ECO:0000303" key="3">
    <source>
    </source>
</evidence>
<evidence type="ECO:0000305" key="4"/>
<dbReference type="EMBL" id="AK129323">
    <property type="protein sequence ID" value="BAC98133.1"/>
    <property type="status" value="ALT_INIT"/>
    <property type="molecule type" value="mRNA"/>
</dbReference>
<dbReference type="EMBL" id="AK013101">
    <property type="protein sequence ID" value="BAB28647.1"/>
    <property type="molecule type" value="mRNA"/>
</dbReference>
<dbReference type="EMBL" id="AK037055">
    <property type="protein sequence ID" value="BAC29686.1"/>
    <property type="molecule type" value="mRNA"/>
</dbReference>
<dbReference type="EMBL" id="AL592065">
    <property type="status" value="NOT_ANNOTATED_CDS"/>
    <property type="molecule type" value="Genomic_DNA"/>
</dbReference>
<dbReference type="EMBL" id="BC050081">
    <property type="protein sequence ID" value="AAH50081.1"/>
    <property type="molecule type" value="mRNA"/>
</dbReference>
<dbReference type="EMBL" id="BC059056">
    <property type="protein sequence ID" value="AAH59056.1"/>
    <property type="molecule type" value="mRNA"/>
</dbReference>
<dbReference type="CCDS" id="CCDS25198.1">
    <molecule id="Q80UK8-1"/>
</dbReference>
<dbReference type="RefSeq" id="NP_001350058.1">
    <molecule id="Q80UK8-1"/>
    <property type="nucleotide sequence ID" value="NM_001363129.1"/>
</dbReference>
<dbReference type="RefSeq" id="NP_081697.2">
    <molecule id="Q80UK8-1"/>
    <property type="nucleotide sequence ID" value="NM_027421.3"/>
</dbReference>
<dbReference type="RefSeq" id="XP_006534242.1">
    <molecule id="Q80UK8-1"/>
    <property type="nucleotide sequence ID" value="XM_006534179.5"/>
</dbReference>
<dbReference type="RefSeq" id="XP_006534243.1">
    <molecule id="Q80UK8-1"/>
    <property type="nucleotide sequence ID" value="XM_006534180.4"/>
</dbReference>
<dbReference type="RefSeq" id="XP_006534244.1">
    <molecule id="Q80UK8-1"/>
    <property type="nucleotide sequence ID" value="XM_006534181.5"/>
</dbReference>
<dbReference type="RefSeq" id="XP_006534245.1">
    <property type="nucleotide sequence ID" value="XM_006534182.3"/>
</dbReference>
<dbReference type="RefSeq" id="XP_030102160.1">
    <molecule id="Q80UK8-1"/>
    <property type="nucleotide sequence ID" value="XM_030246300.2"/>
</dbReference>
<dbReference type="SMR" id="Q80UK8"/>
<dbReference type="BioGRID" id="214039">
    <property type="interactions" value="1"/>
</dbReference>
<dbReference type="FunCoup" id="Q80UK8">
    <property type="interactions" value="5929"/>
</dbReference>
<dbReference type="IntAct" id="Q80UK8">
    <property type="interactions" value="1"/>
</dbReference>
<dbReference type="MINT" id="Q80UK8"/>
<dbReference type="STRING" id="10090.ENSMUSP00000018212"/>
<dbReference type="GlyGen" id="Q80UK8">
    <property type="glycosylation" value="1 site"/>
</dbReference>
<dbReference type="iPTMnet" id="Q80UK8"/>
<dbReference type="PhosphoSitePlus" id="Q80UK8"/>
<dbReference type="jPOST" id="Q80UK8"/>
<dbReference type="PaxDb" id="10090-ENSMUSP00000018212"/>
<dbReference type="PeptideAtlas" id="Q80UK8"/>
<dbReference type="ProteomicsDB" id="269490">
    <molecule id="Q80UK8-1"/>
</dbReference>
<dbReference type="ProteomicsDB" id="269491">
    <molecule id="Q80UK8-2"/>
</dbReference>
<dbReference type="Pumba" id="Q80UK8"/>
<dbReference type="Antibodypedia" id="57004">
    <property type="antibodies" value="65 antibodies from 19 providers"/>
</dbReference>
<dbReference type="Ensembl" id="ENSMUST00000018212.13">
    <molecule id="Q80UK8-1"/>
    <property type="protein sequence ID" value="ENSMUSP00000018212.7"/>
    <property type="gene ID" value="ENSMUSG00000018068.14"/>
</dbReference>
<dbReference type="Ensembl" id="ENSMUST00000108039.8">
    <molecule id="Q80UK8-1"/>
    <property type="protein sequence ID" value="ENSMUSP00000103674.2"/>
    <property type="gene ID" value="ENSMUSG00000018068.14"/>
</dbReference>
<dbReference type="GeneID" id="70422"/>
<dbReference type="KEGG" id="mmu:70422"/>
<dbReference type="UCSC" id="uc007ksi.1">
    <molecule id="Q80UK8-1"/>
    <property type="organism name" value="mouse"/>
</dbReference>
<dbReference type="AGR" id="MGI:1917672"/>
<dbReference type="CTD" id="57508"/>
<dbReference type="MGI" id="MGI:1917672">
    <property type="gene designation" value="Ints2"/>
</dbReference>
<dbReference type="VEuPathDB" id="HostDB:ENSMUSG00000018068"/>
<dbReference type="eggNOG" id="ENOG502QSP2">
    <property type="taxonomic scope" value="Eukaryota"/>
</dbReference>
<dbReference type="GeneTree" id="ENSGT00390000011888"/>
<dbReference type="HOGENOM" id="CLU_007707_0_0_1"/>
<dbReference type="InParanoid" id="Q80UK8"/>
<dbReference type="OMA" id="IISNYPH"/>
<dbReference type="OrthoDB" id="70899at2759"/>
<dbReference type="PhylomeDB" id="Q80UK8"/>
<dbReference type="TreeFam" id="TF324737"/>
<dbReference type="Reactome" id="R-MMU-6807505">
    <property type="pathway name" value="RNA polymerase II transcribes snRNA genes"/>
</dbReference>
<dbReference type="BioGRID-ORCS" id="70422">
    <property type="hits" value="22 hits in 75 CRISPR screens"/>
</dbReference>
<dbReference type="ChiTaRS" id="Ints2">
    <property type="organism name" value="mouse"/>
</dbReference>
<dbReference type="PRO" id="PR:Q80UK8"/>
<dbReference type="Proteomes" id="UP000000589">
    <property type="component" value="Chromosome 11"/>
</dbReference>
<dbReference type="RNAct" id="Q80UK8">
    <property type="molecule type" value="protein"/>
</dbReference>
<dbReference type="Bgee" id="ENSMUSG00000018068">
    <property type="expression patterns" value="Expressed in manus and 226 other cell types or tissues"/>
</dbReference>
<dbReference type="ExpressionAtlas" id="Q80UK8">
    <property type="expression patterns" value="baseline and differential"/>
</dbReference>
<dbReference type="GO" id="GO:0005737">
    <property type="term" value="C:cytoplasm"/>
    <property type="evidence" value="ECO:0000250"/>
    <property type="project" value="UniProtKB"/>
</dbReference>
<dbReference type="GO" id="GO:0160232">
    <property type="term" value="C:INTAC complex"/>
    <property type="evidence" value="ECO:0000250"/>
    <property type="project" value="UniProtKB"/>
</dbReference>
<dbReference type="GO" id="GO:0032039">
    <property type="term" value="C:integrator complex"/>
    <property type="evidence" value="ECO:0000250"/>
    <property type="project" value="HGNC-UCL"/>
</dbReference>
<dbReference type="GO" id="GO:0031965">
    <property type="term" value="C:nuclear membrane"/>
    <property type="evidence" value="ECO:0007669"/>
    <property type="project" value="UniProtKB-SubCell"/>
</dbReference>
<dbReference type="GO" id="GO:0005634">
    <property type="term" value="C:nucleus"/>
    <property type="evidence" value="ECO:0000250"/>
    <property type="project" value="UniProtKB"/>
</dbReference>
<dbReference type="GO" id="GO:0160240">
    <property type="term" value="P:RNA polymerase II transcription initiation surveillance"/>
    <property type="evidence" value="ECO:0000250"/>
    <property type="project" value="UniProtKB"/>
</dbReference>
<dbReference type="GO" id="GO:0016180">
    <property type="term" value="P:snRNA processing"/>
    <property type="evidence" value="ECO:0000250"/>
    <property type="project" value="HGNC-UCL"/>
</dbReference>
<dbReference type="InterPro" id="IPR026236">
    <property type="entry name" value="Int2_metazoa"/>
</dbReference>
<dbReference type="InterPro" id="IPR029321">
    <property type="entry name" value="INTS2"/>
</dbReference>
<dbReference type="PANTHER" id="PTHR28608">
    <property type="entry name" value="INTEGRATOR COMPLEX SUBUNIT 2"/>
    <property type="match status" value="1"/>
</dbReference>
<dbReference type="PANTHER" id="PTHR28608:SF1">
    <property type="entry name" value="INTEGRATOR COMPLEX SUBUNIT 2"/>
    <property type="match status" value="1"/>
</dbReference>
<dbReference type="Pfam" id="PF14750">
    <property type="entry name" value="INTS2"/>
    <property type="match status" value="1"/>
</dbReference>
<dbReference type="PRINTS" id="PR02105">
    <property type="entry name" value="INTSUBUNIT2"/>
</dbReference>
<name>INT2_MOUSE</name>
<protein>
    <recommendedName>
        <fullName>Integrator complex subunit 2</fullName>
        <shortName>Int2</shortName>
    </recommendedName>
</protein>
<keyword id="KW-0025">Alternative splicing</keyword>
<keyword id="KW-0963">Cytoplasm</keyword>
<keyword id="KW-0472">Membrane</keyword>
<keyword id="KW-0539">Nucleus</keyword>
<keyword id="KW-1185">Reference proteome</keyword>
<keyword id="KW-0812">Transmembrane</keyword>
<keyword id="KW-1133">Transmembrane helix</keyword>